<feature type="chain" id="PRO_1000125075" description="Phosphoenolpyruvate carboxykinase (ATP)">
    <location>
        <begin position="1"/>
        <end position="539"/>
    </location>
</feature>
<feature type="binding site" evidence="1">
    <location>
        <position position="61"/>
    </location>
    <ligand>
        <name>substrate</name>
    </ligand>
</feature>
<feature type="binding site" evidence="1">
    <location>
        <position position="195"/>
    </location>
    <ligand>
        <name>substrate</name>
    </ligand>
</feature>
<feature type="binding site" evidence="1">
    <location>
        <position position="201"/>
    </location>
    <ligand>
        <name>ATP</name>
        <dbReference type="ChEBI" id="CHEBI:30616"/>
    </ligand>
</feature>
<feature type="binding site" evidence="1">
    <location>
        <position position="201"/>
    </location>
    <ligand>
        <name>Mn(2+)</name>
        <dbReference type="ChEBI" id="CHEBI:29035"/>
    </ligand>
</feature>
<feature type="binding site" evidence="1">
    <location>
        <position position="201"/>
    </location>
    <ligand>
        <name>substrate</name>
    </ligand>
</feature>
<feature type="binding site" evidence="1">
    <location>
        <position position="220"/>
    </location>
    <ligand>
        <name>ATP</name>
        <dbReference type="ChEBI" id="CHEBI:30616"/>
    </ligand>
</feature>
<feature type="binding site" evidence="1">
    <location>
        <position position="220"/>
    </location>
    <ligand>
        <name>Mn(2+)</name>
        <dbReference type="ChEBI" id="CHEBI:29035"/>
    </ligand>
</feature>
<feature type="binding site" evidence="1">
    <location>
        <begin position="238"/>
        <end position="246"/>
    </location>
    <ligand>
        <name>ATP</name>
        <dbReference type="ChEBI" id="CHEBI:30616"/>
    </ligand>
</feature>
<feature type="binding site" evidence="1">
    <location>
        <position position="259"/>
    </location>
    <ligand>
        <name>Mn(2+)</name>
        <dbReference type="ChEBI" id="CHEBI:29035"/>
    </ligand>
</feature>
<feature type="binding site" evidence="1">
    <location>
        <position position="287"/>
    </location>
    <ligand>
        <name>ATP</name>
        <dbReference type="ChEBI" id="CHEBI:30616"/>
    </ligand>
</feature>
<feature type="binding site" evidence="1">
    <location>
        <position position="325"/>
    </location>
    <ligand>
        <name>ATP</name>
        <dbReference type="ChEBI" id="CHEBI:30616"/>
    </ligand>
</feature>
<feature type="binding site" evidence="1">
    <location>
        <position position="325"/>
    </location>
    <ligand>
        <name>substrate</name>
    </ligand>
</feature>
<feature type="binding site" evidence="1">
    <location>
        <position position="450"/>
    </location>
    <ligand>
        <name>ATP</name>
        <dbReference type="ChEBI" id="CHEBI:30616"/>
    </ligand>
</feature>
<reference key="1">
    <citation type="submission" date="2008-03" db="EMBL/GenBank/DDBJ databases">
        <title>Complete sequence of chromosome of Methylobacterium radiotolerans JCM 2831.</title>
        <authorList>
            <consortium name="US DOE Joint Genome Institute"/>
            <person name="Copeland A."/>
            <person name="Lucas S."/>
            <person name="Lapidus A."/>
            <person name="Glavina del Rio T."/>
            <person name="Dalin E."/>
            <person name="Tice H."/>
            <person name="Bruce D."/>
            <person name="Goodwin L."/>
            <person name="Pitluck S."/>
            <person name="Kiss H."/>
            <person name="Brettin T."/>
            <person name="Detter J.C."/>
            <person name="Han C."/>
            <person name="Kuske C.R."/>
            <person name="Schmutz J."/>
            <person name="Larimer F."/>
            <person name="Land M."/>
            <person name="Hauser L."/>
            <person name="Kyrpides N."/>
            <person name="Mikhailova N."/>
            <person name="Marx C.J."/>
            <person name="Richardson P."/>
        </authorList>
    </citation>
    <scope>NUCLEOTIDE SEQUENCE [LARGE SCALE GENOMIC DNA]</scope>
    <source>
        <strain>ATCC 27329 / DSM 1819 / JCM 2831 / NBRC 15690 / NCIMB 10815 / 0-1</strain>
    </source>
</reference>
<proteinExistence type="inferred from homology"/>
<accession>B1M6N5</accession>
<name>PCKA_METRJ</name>
<organism>
    <name type="scientific">Methylobacterium radiotolerans (strain ATCC 27329 / DSM 1819 / JCM 2831 / NBRC 15690 / NCIMB 10815 / 0-1)</name>
    <dbReference type="NCBI Taxonomy" id="426355"/>
    <lineage>
        <taxon>Bacteria</taxon>
        <taxon>Pseudomonadati</taxon>
        <taxon>Pseudomonadota</taxon>
        <taxon>Alphaproteobacteria</taxon>
        <taxon>Hyphomicrobiales</taxon>
        <taxon>Methylobacteriaceae</taxon>
        <taxon>Methylobacterium</taxon>
    </lineage>
</organism>
<dbReference type="EC" id="4.1.1.49" evidence="1"/>
<dbReference type="EMBL" id="CP001001">
    <property type="protein sequence ID" value="ACB25126.1"/>
    <property type="molecule type" value="Genomic_DNA"/>
</dbReference>
<dbReference type="RefSeq" id="WP_012320091.1">
    <property type="nucleotide sequence ID" value="NC_010505.1"/>
</dbReference>
<dbReference type="SMR" id="B1M6N5"/>
<dbReference type="STRING" id="426355.Mrad2831_3144"/>
<dbReference type="GeneID" id="6139191"/>
<dbReference type="KEGG" id="mrd:Mrad2831_3144"/>
<dbReference type="eggNOG" id="COG1866">
    <property type="taxonomic scope" value="Bacteria"/>
</dbReference>
<dbReference type="HOGENOM" id="CLU_018247_0_1_5"/>
<dbReference type="OrthoDB" id="9806325at2"/>
<dbReference type="UniPathway" id="UPA00138"/>
<dbReference type="Proteomes" id="UP000006589">
    <property type="component" value="Chromosome"/>
</dbReference>
<dbReference type="GO" id="GO:0005829">
    <property type="term" value="C:cytosol"/>
    <property type="evidence" value="ECO:0007669"/>
    <property type="project" value="TreeGrafter"/>
</dbReference>
<dbReference type="GO" id="GO:0005524">
    <property type="term" value="F:ATP binding"/>
    <property type="evidence" value="ECO:0007669"/>
    <property type="project" value="UniProtKB-UniRule"/>
</dbReference>
<dbReference type="GO" id="GO:0046872">
    <property type="term" value="F:metal ion binding"/>
    <property type="evidence" value="ECO:0007669"/>
    <property type="project" value="UniProtKB-KW"/>
</dbReference>
<dbReference type="GO" id="GO:0004612">
    <property type="term" value="F:phosphoenolpyruvate carboxykinase (ATP) activity"/>
    <property type="evidence" value="ECO:0007669"/>
    <property type="project" value="UniProtKB-UniRule"/>
</dbReference>
<dbReference type="GO" id="GO:0006094">
    <property type="term" value="P:gluconeogenesis"/>
    <property type="evidence" value="ECO:0007669"/>
    <property type="project" value="UniProtKB-UniRule"/>
</dbReference>
<dbReference type="Gene3D" id="3.90.228.20">
    <property type="match status" value="1"/>
</dbReference>
<dbReference type="Gene3D" id="3.40.449.10">
    <property type="entry name" value="Phosphoenolpyruvate Carboxykinase, domain 1"/>
    <property type="match status" value="1"/>
</dbReference>
<dbReference type="Gene3D" id="2.170.8.10">
    <property type="entry name" value="Phosphoenolpyruvate Carboxykinase, domain 2"/>
    <property type="match status" value="1"/>
</dbReference>
<dbReference type="HAMAP" id="MF_00453">
    <property type="entry name" value="PEPCK_ATP"/>
    <property type="match status" value="1"/>
</dbReference>
<dbReference type="InterPro" id="IPR001272">
    <property type="entry name" value="PEP_carboxykinase_ATP"/>
</dbReference>
<dbReference type="InterPro" id="IPR013035">
    <property type="entry name" value="PEP_carboxykinase_C"/>
</dbReference>
<dbReference type="InterPro" id="IPR008210">
    <property type="entry name" value="PEP_carboxykinase_N"/>
</dbReference>
<dbReference type="NCBIfam" id="TIGR00224">
    <property type="entry name" value="pckA"/>
    <property type="match status" value="1"/>
</dbReference>
<dbReference type="NCBIfam" id="NF006820">
    <property type="entry name" value="PRK09344.1-2"/>
    <property type="match status" value="1"/>
</dbReference>
<dbReference type="NCBIfam" id="NF006821">
    <property type="entry name" value="PRK09344.1-3"/>
    <property type="match status" value="1"/>
</dbReference>
<dbReference type="NCBIfam" id="NF006822">
    <property type="entry name" value="PRK09344.1-4"/>
    <property type="match status" value="1"/>
</dbReference>
<dbReference type="PANTHER" id="PTHR30031:SF0">
    <property type="entry name" value="PHOSPHOENOLPYRUVATE CARBOXYKINASE (ATP)"/>
    <property type="match status" value="1"/>
</dbReference>
<dbReference type="PANTHER" id="PTHR30031">
    <property type="entry name" value="PHOSPHOENOLPYRUVATE CARBOXYKINASE ATP"/>
    <property type="match status" value="1"/>
</dbReference>
<dbReference type="Pfam" id="PF01293">
    <property type="entry name" value="PEPCK_ATP"/>
    <property type="match status" value="1"/>
</dbReference>
<dbReference type="PIRSF" id="PIRSF006294">
    <property type="entry name" value="PEP_crbxkin"/>
    <property type="match status" value="1"/>
</dbReference>
<dbReference type="SUPFAM" id="SSF68923">
    <property type="entry name" value="PEP carboxykinase N-terminal domain"/>
    <property type="match status" value="1"/>
</dbReference>
<dbReference type="SUPFAM" id="SSF53795">
    <property type="entry name" value="PEP carboxykinase-like"/>
    <property type="match status" value="1"/>
</dbReference>
<comment type="function">
    <text evidence="1">Involved in the gluconeogenesis. Catalyzes the conversion of oxaloacetate (OAA) to phosphoenolpyruvate (PEP) through direct phosphoryl transfer between the nucleoside triphosphate and OAA.</text>
</comment>
<comment type="catalytic activity">
    <reaction evidence="1">
        <text>oxaloacetate + ATP = phosphoenolpyruvate + ADP + CO2</text>
        <dbReference type="Rhea" id="RHEA:18617"/>
        <dbReference type="ChEBI" id="CHEBI:16452"/>
        <dbReference type="ChEBI" id="CHEBI:16526"/>
        <dbReference type="ChEBI" id="CHEBI:30616"/>
        <dbReference type="ChEBI" id="CHEBI:58702"/>
        <dbReference type="ChEBI" id="CHEBI:456216"/>
        <dbReference type="EC" id="4.1.1.49"/>
    </reaction>
</comment>
<comment type="cofactor">
    <cofactor evidence="1">
        <name>Mn(2+)</name>
        <dbReference type="ChEBI" id="CHEBI:29035"/>
    </cofactor>
    <text evidence="1">Binds 1 Mn(2+) ion per subunit.</text>
</comment>
<comment type="pathway">
    <text evidence="1">Carbohydrate biosynthesis; gluconeogenesis.</text>
</comment>
<comment type="subcellular location">
    <subcellularLocation>
        <location evidence="1">Cytoplasm</location>
    </subcellularLocation>
</comment>
<comment type="similarity">
    <text evidence="1">Belongs to the phosphoenolpyruvate carboxykinase (ATP) family.</text>
</comment>
<sequence length="539" mass="58719">MTNIGDHNAAHGAEAAGFRDLKAVHWNFEAPRLYEEALSRKEAQLARGGAIVATTGSHTGRSPKDKFVVRDAGTENEVWWDNNGAITPEQFETLRQDFLKHAEGRELFAQDLYGGADPAYRVKARVFTEFAWHSLFIRNLLIRPDRSEIASYVPDMTIIDLPSFQADPARHGCRSKTVIAIDFSKKLVLIGGSAYAGEMKKSVFTYLNYILPGQGVMPMHCSANAALDAEGGSAIFFGLSGTGKTTLSNDSSRQLLGDDEHGWSNSGIFNFEGGCYAKTIRLSRNAEPEIYATTERFGTVMENVIIDPVTRVPDFDDASLTENTRCAYPLDFIANASATGRAGHPKNIVMLTCDAFGVMPPIAKLTGAEAMYHFLSGYTAKVAGTERGLTGPEATFSTCFGAPFMPRHPSTYGNLLRDLIAKHSVDCWLVNTGWTGGGVGTGRRMPIRVTRRLLSAALDGSLAQAEFRRDPYFGFAVPVSVPGVEPHILTPVKTWANKGAFVETAARLVKMFDDNFKRFEDHVDADVRSAGPTAQAIAA</sequence>
<evidence type="ECO:0000255" key="1">
    <source>
        <dbReference type="HAMAP-Rule" id="MF_00453"/>
    </source>
</evidence>
<gene>
    <name evidence="1" type="primary">pckA</name>
    <name type="ordered locus">Mrad2831_3144</name>
</gene>
<keyword id="KW-0067">ATP-binding</keyword>
<keyword id="KW-0963">Cytoplasm</keyword>
<keyword id="KW-0210">Decarboxylase</keyword>
<keyword id="KW-0312">Gluconeogenesis</keyword>
<keyword id="KW-0456">Lyase</keyword>
<keyword id="KW-0464">Manganese</keyword>
<keyword id="KW-0479">Metal-binding</keyword>
<keyword id="KW-0547">Nucleotide-binding</keyword>
<protein>
    <recommendedName>
        <fullName evidence="1">Phosphoenolpyruvate carboxykinase (ATP)</fullName>
        <shortName evidence="1">PCK</shortName>
        <shortName evidence="1">PEP carboxykinase</shortName>
        <shortName evidence="1">PEPCK</shortName>
        <ecNumber evidence="1">4.1.1.49</ecNumber>
    </recommendedName>
</protein>